<accession>Q31DX2</accession>
<evidence type="ECO:0000255" key="1">
    <source>
        <dbReference type="HAMAP-Rule" id="MF_01552"/>
    </source>
</evidence>
<feature type="chain" id="PRO_1000068861" description="Probable alpha-L-glutamate ligase">
    <location>
        <begin position="1"/>
        <end position="301"/>
    </location>
</feature>
<feature type="domain" description="ATP-grasp" evidence="1">
    <location>
        <begin position="104"/>
        <end position="287"/>
    </location>
</feature>
<feature type="binding site" evidence="1">
    <location>
        <position position="141"/>
    </location>
    <ligand>
        <name>ATP</name>
        <dbReference type="ChEBI" id="CHEBI:30616"/>
    </ligand>
</feature>
<feature type="binding site" evidence="1">
    <location>
        <begin position="178"/>
        <end position="179"/>
    </location>
    <ligand>
        <name>ATP</name>
        <dbReference type="ChEBI" id="CHEBI:30616"/>
    </ligand>
</feature>
<feature type="binding site" evidence="1">
    <location>
        <position position="187"/>
    </location>
    <ligand>
        <name>ATP</name>
        <dbReference type="ChEBI" id="CHEBI:30616"/>
    </ligand>
</feature>
<feature type="binding site" evidence="1">
    <location>
        <begin position="211"/>
        <end position="213"/>
    </location>
    <ligand>
        <name>ATP</name>
        <dbReference type="ChEBI" id="CHEBI:30616"/>
    </ligand>
</feature>
<feature type="binding site" evidence="1">
    <location>
        <position position="248"/>
    </location>
    <ligand>
        <name>Mg(2+)</name>
        <dbReference type="ChEBI" id="CHEBI:18420"/>
        <label>1</label>
    </ligand>
</feature>
<feature type="binding site" evidence="1">
    <location>
        <position position="248"/>
    </location>
    <ligand>
        <name>Mn(2+)</name>
        <dbReference type="ChEBI" id="CHEBI:29035"/>
        <label>1</label>
    </ligand>
</feature>
<feature type="binding site" evidence="1">
    <location>
        <position position="260"/>
    </location>
    <ligand>
        <name>Mg(2+)</name>
        <dbReference type="ChEBI" id="CHEBI:18420"/>
        <label>1</label>
    </ligand>
</feature>
<feature type="binding site" evidence="1">
    <location>
        <position position="260"/>
    </location>
    <ligand>
        <name>Mg(2+)</name>
        <dbReference type="ChEBI" id="CHEBI:18420"/>
        <label>2</label>
    </ligand>
</feature>
<feature type="binding site" evidence="1">
    <location>
        <position position="260"/>
    </location>
    <ligand>
        <name>Mn(2+)</name>
        <dbReference type="ChEBI" id="CHEBI:29035"/>
        <label>1</label>
    </ligand>
</feature>
<feature type="binding site" evidence="1">
    <location>
        <position position="260"/>
    </location>
    <ligand>
        <name>Mn(2+)</name>
        <dbReference type="ChEBI" id="CHEBI:29035"/>
        <label>2</label>
    </ligand>
</feature>
<feature type="binding site" evidence="1">
    <location>
        <position position="262"/>
    </location>
    <ligand>
        <name>Mg(2+)</name>
        <dbReference type="ChEBI" id="CHEBI:18420"/>
        <label>2</label>
    </ligand>
</feature>
<feature type="binding site" evidence="1">
    <location>
        <position position="262"/>
    </location>
    <ligand>
        <name>Mn(2+)</name>
        <dbReference type="ChEBI" id="CHEBI:29035"/>
        <label>2</label>
    </ligand>
</feature>
<reference key="1">
    <citation type="journal article" date="2006" name="PLoS Biol.">
        <title>The genome of deep-sea vent chemolithoautotroph Thiomicrospira crunogena XCL-2.</title>
        <authorList>
            <person name="Scott K.M."/>
            <person name="Sievert S.M."/>
            <person name="Abril F.N."/>
            <person name="Ball L.A."/>
            <person name="Barrett C.J."/>
            <person name="Blake R.A."/>
            <person name="Boller A.J."/>
            <person name="Chain P.S.G."/>
            <person name="Clark J.A."/>
            <person name="Davis C.R."/>
            <person name="Detter C."/>
            <person name="Do K.F."/>
            <person name="Dobrinski K.P."/>
            <person name="Faza B.I."/>
            <person name="Fitzpatrick K.A."/>
            <person name="Freyermuth S.K."/>
            <person name="Harmer T.L."/>
            <person name="Hauser L.J."/>
            <person name="Huegler M."/>
            <person name="Kerfeld C.A."/>
            <person name="Klotz M.G."/>
            <person name="Kong W.W."/>
            <person name="Land M."/>
            <person name="Lapidus A."/>
            <person name="Larimer F.W."/>
            <person name="Longo D.L."/>
            <person name="Lucas S."/>
            <person name="Malfatti S.A."/>
            <person name="Massey S.E."/>
            <person name="Martin D.D."/>
            <person name="McCuddin Z."/>
            <person name="Meyer F."/>
            <person name="Moore J.L."/>
            <person name="Ocampo L.H. Jr."/>
            <person name="Paul J.H."/>
            <person name="Paulsen I.T."/>
            <person name="Reep D.K."/>
            <person name="Ren Q."/>
            <person name="Ross R.L."/>
            <person name="Sato P.Y."/>
            <person name="Thomas P."/>
            <person name="Tinkham L.E."/>
            <person name="Zeruth G.T."/>
        </authorList>
    </citation>
    <scope>NUCLEOTIDE SEQUENCE [LARGE SCALE GENOMIC DNA]</scope>
    <source>
        <strain>DSM 25203 / XCL-2</strain>
    </source>
</reference>
<keyword id="KW-0067">ATP-binding</keyword>
<keyword id="KW-0436">Ligase</keyword>
<keyword id="KW-0460">Magnesium</keyword>
<keyword id="KW-0464">Manganese</keyword>
<keyword id="KW-0479">Metal-binding</keyword>
<keyword id="KW-0547">Nucleotide-binding</keyword>
<keyword id="KW-0648">Protein biosynthesis</keyword>
<proteinExistence type="inferred from homology"/>
<gene>
    <name evidence="1" type="primary">rimK</name>
    <name type="ordered locus">Tcr_2061</name>
</gene>
<dbReference type="EC" id="6.3.2.-" evidence="1"/>
<dbReference type="EMBL" id="CP000109">
    <property type="protein sequence ID" value="ABB42651.1"/>
    <property type="molecule type" value="Genomic_DNA"/>
</dbReference>
<dbReference type="SMR" id="Q31DX2"/>
<dbReference type="STRING" id="317025.Tcr_2061"/>
<dbReference type="KEGG" id="tcx:Tcr_2061"/>
<dbReference type="eggNOG" id="COG0189">
    <property type="taxonomic scope" value="Bacteria"/>
</dbReference>
<dbReference type="HOGENOM" id="CLU_054353_0_1_6"/>
<dbReference type="OrthoDB" id="3865600at2"/>
<dbReference type="GO" id="GO:0005737">
    <property type="term" value="C:cytoplasm"/>
    <property type="evidence" value="ECO:0007669"/>
    <property type="project" value="TreeGrafter"/>
</dbReference>
<dbReference type="GO" id="GO:0005524">
    <property type="term" value="F:ATP binding"/>
    <property type="evidence" value="ECO:0007669"/>
    <property type="project" value="UniProtKB-UniRule"/>
</dbReference>
<dbReference type="GO" id="GO:0046872">
    <property type="term" value="F:metal ion binding"/>
    <property type="evidence" value="ECO:0007669"/>
    <property type="project" value="UniProtKB-KW"/>
</dbReference>
<dbReference type="GO" id="GO:0018169">
    <property type="term" value="F:ribosomal S6-glutamic acid ligase activity"/>
    <property type="evidence" value="ECO:0007669"/>
    <property type="project" value="TreeGrafter"/>
</dbReference>
<dbReference type="GO" id="GO:0036211">
    <property type="term" value="P:protein modification process"/>
    <property type="evidence" value="ECO:0007669"/>
    <property type="project" value="InterPro"/>
</dbReference>
<dbReference type="GO" id="GO:0009432">
    <property type="term" value="P:SOS response"/>
    <property type="evidence" value="ECO:0007669"/>
    <property type="project" value="TreeGrafter"/>
</dbReference>
<dbReference type="GO" id="GO:0006412">
    <property type="term" value="P:translation"/>
    <property type="evidence" value="ECO:0007669"/>
    <property type="project" value="UniProtKB-KW"/>
</dbReference>
<dbReference type="FunFam" id="3.30.470.20:FF:000058">
    <property type="entry name" value="Alpha-aminoadipate--LysW ligase LysX protein"/>
    <property type="match status" value="1"/>
</dbReference>
<dbReference type="FunFam" id="3.40.50.20:FF:000004">
    <property type="entry name" value="Probable alpha-L-glutamate ligase"/>
    <property type="match status" value="1"/>
</dbReference>
<dbReference type="FunFam" id="3.30.1490.20:FF:000005">
    <property type="entry name" value="Probable alpha-L-glutamate ligase 1"/>
    <property type="match status" value="1"/>
</dbReference>
<dbReference type="Gene3D" id="3.40.50.20">
    <property type="match status" value="1"/>
</dbReference>
<dbReference type="Gene3D" id="3.30.1490.20">
    <property type="entry name" value="ATP-grasp fold, A domain"/>
    <property type="match status" value="1"/>
</dbReference>
<dbReference type="Gene3D" id="3.30.470.20">
    <property type="entry name" value="ATP-grasp fold, B domain"/>
    <property type="match status" value="1"/>
</dbReference>
<dbReference type="HAMAP" id="MF_01552">
    <property type="entry name" value="RimK"/>
    <property type="match status" value="1"/>
</dbReference>
<dbReference type="InterPro" id="IPR011761">
    <property type="entry name" value="ATP-grasp"/>
</dbReference>
<dbReference type="InterPro" id="IPR013651">
    <property type="entry name" value="ATP-grasp_RimK-type"/>
</dbReference>
<dbReference type="InterPro" id="IPR013815">
    <property type="entry name" value="ATP_grasp_subdomain_1"/>
</dbReference>
<dbReference type="InterPro" id="IPR023533">
    <property type="entry name" value="RimK"/>
</dbReference>
<dbReference type="InterPro" id="IPR041107">
    <property type="entry name" value="Rimk_N"/>
</dbReference>
<dbReference type="InterPro" id="IPR004666">
    <property type="entry name" value="Rp_bS6_RimK/Lys_biosynth_LsyX"/>
</dbReference>
<dbReference type="NCBIfam" id="NF007764">
    <property type="entry name" value="PRK10446.1"/>
    <property type="match status" value="1"/>
</dbReference>
<dbReference type="NCBIfam" id="TIGR00768">
    <property type="entry name" value="rimK_fam"/>
    <property type="match status" value="1"/>
</dbReference>
<dbReference type="PANTHER" id="PTHR21621:SF7">
    <property type="entry name" value="RIBOSOMAL PROTEIN BS6--L-GLUTAMATE LIGASE"/>
    <property type="match status" value="1"/>
</dbReference>
<dbReference type="PANTHER" id="PTHR21621">
    <property type="entry name" value="RIBOSOMAL PROTEIN S6 MODIFICATION PROTEIN"/>
    <property type="match status" value="1"/>
</dbReference>
<dbReference type="Pfam" id="PF08443">
    <property type="entry name" value="RimK"/>
    <property type="match status" value="1"/>
</dbReference>
<dbReference type="Pfam" id="PF18030">
    <property type="entry name" value="Rimk_N"/>
    <property type="match status" value="1"/>
</dbReference>
<dbReference type="SUPFAM" id="SSF56059">
    <property type="entry name" value="Glutathione synthetase ATP-binding domain-like"/>
    <property type="match status" value="1"/>
</dbReference>
<dbReference type="PROSITE" id="PS50975">
    <property type="entry name" value="ATP_GRASP"/>
    <property type="match status" value="1"/>
</dbReference>
<comment type="cofactor">
    <cofactor evidence="1">
        <name>Mg(2+)</name>
        <dbReference type="ChEBI" id="CHEBI:18420"/>
    </cofactor>
    <cofactor evidence="1">
        <name>Mn(2+)</name>
        <dbReference type="ChEBI" id="CHEBI:29035"/>
    </cofactor>
    <text evidence="1">Binds 2 magnesium or manganese ions per subunit.</text>
</comment>
<comment type="similarity">
    <text evidence="1">Belongs to the RimK family.</text>
</comment>
<organism>
    <name type="scientific">Hydrogenovibrio crunogenus (strain DSM 25203 / XCL-2)</name>
    <name type="common">Thiomicrospira crunogena</name>
    <dbReference type="NCBI Taxonomy" id="317025"/>
    <lineage>
        <taxon>Bacteria</taxon>
        <taxon>Pseudomonadati</taxon>
        <taxon>Pseudomonadota</taxon>
        <taxon>Gammaproteobacteria</taxon>
        <taxon>Thiotrichales</taxon>
        <taxon>Piscirickettsiaceae</taxon>
        <taxon>Hydrogenovibrio</taxon>
    </lineage>
</organism>
<sequence length="301" mass="32549">MKIAILSRNAKLYSTRRLIEAAEERGHEVRVIDALRCYMNISSNHPQVHYKGEVLDGFDAIIPRIGASITFYGTAVLRQFEMMGVYPLNESVAISRSRDKLRSLQLLSRRGVGLPVTGFAHSPDDVNDLLETVGGAPVVIKLLEGTQGVGVVLADTHSAAESVIQAFNGLKANILVQEFIKEARGADLRCFVIGGKVVASMKRQAKDGEFRSNLHQGGSASLVRITPEERATAVRAAKIMGLNVCGVDLLRSNHGPVVMEVNSSPGIEGIETATQKDIASQIIAFIEKNAKPHNTKTRGKG</sequence>
<name>RIMK_HYDCU</name>
<protein>
    <recommendedName>
        <fullName evidence="1">Probable alpha-L-glutamate ligase</fullName>
        <ecNumber evidence="1">6.3.2.-</ecNumber>
    </recommendedName>
</protein>